<organism>
    <name type="scientific">Mytilus edulis</name>
    <name type="common">Blue mussel</name>
    <dbReference type="NCBI Taxonomy" id="6550"/>
    <lineage>
        <taxon>Eukaryota</taxon>
        <taxon>Metazoa</taxon>
        <taxon>Spiralia</taxon>
        <taxon>Lophotrochozoa</taxon>
        <taxon>Mollusca</taxon>
        <taxon>Bivalvia</taxon>
        <taxon>Autobranchia</taxon>
        <taxon>Pteriomorphia</taxon>
        <taxon>Mytilida</taxon>
        <taxon>Mytiloidea</taxon>
        <taxon>Mytilidae</taxon>
        <taxon>Mytilinae</taxon>
        <taxon>Mytilus</taxon>
    </lineage>
</organism>
<reference key="1">
    <citation type="journal article" date="1999" name="Comp. Biochem. Physiol.">
        <title>Cloning and characterization of metallothionein cDNAs in the mussel Mytilus edulis L. digestive gland.</title>
        <authorList>
            <person name="Barsyte D."/>
            <person name="White K.N."/>
            <person name="Lovejoy D.A."/>
        </authorList>
    </citation>
    <scope>NUCLEOTIDE SEQUENCE [MRNA]</scope>
    <source>
        <tissue>Digestive gland</tissue>
    </source>
</reference>
<reference key="2">
    <citation type="journal article" date="1993" name="Eur. J. Biochem.">
        <title>Complete amino acid sequences of five dimeric and four monomeric forms of metallothionein from the edible mussel Mytilus edulis.</title>
        <authorList>
            <person name="Mackay E.A."/>
            <person name="Overnell J."/>
            <person name="Dunbar B."/>
            <person name="Davidson I."/>
            <person name="Hunziker P.E."/>
            <person name="Kaegi J.H.R."/>
            <person name="Fothergill J.E."/>
        </authorList>
    </citation>
    <scope>PROTEIN SEQUENCE OF 2-73</scope>
</reference>
<accession>P80247</accession>
<accession>O62555</accession>
<proteinExistence type="evidence at protein level"/>
<evidence type="ECO:0000250" key="1">
    <source>
        <dbReference type="UniProtKB" id="P33187"/>
    </source>
</evidence>
<evidence type="ECO:0000269" key="2">
    <source>
    </source>
</evidence>
<evidence type="ECO:0000305" key="3"/>
<comment type="function">
    <text>The metallothioneins are involved in the cellular sequestration of toxic metal ions.</text>
</comment>
<comment type="subunit">
    <text>Monomer.</text>
</comment>
<comment type="induction">
    <text>By cadmium.</text>
</comment>
<comment type="similarity">
    <text evidence="3">Belongs to the metallothionein superfamily. Type 2 family.</text>
</comment>
<dbReference type="EMBL" id="AJ005453">
    <property type="protein sequence ID" value="CAA06550.1"/>
    <property type="molecule type" value="mRNA"/>
</dbReference>
<dbReference type="PIR" id="S39417">
    <property type="entry name" value="S39417"/>
</dbReference>
<dbReference type="SMR" id="P80247"/>
<dbReference type="GO" id="GO:0046872">
    <property type="term" value="F:metal ion binding"/>
    <property type="evidence" value="ECO:0007669"/>
    <property type="project" value="UniProtKB-KW"/>
</dbReference>
<dbReference type="InterPro" id="IPR001008">
    <property type="entry name" value="Metalthion_mollusc"/>
</dbReference>
<dbReference type="PRINTS" id="PR00875">
    <property type="entry name" value="MTMOLLUSC"/>
</dbReference>
<protein>
    <recommendedName>
        <fullName>Metallothionein 10-II</fullName>
        <shortName>MT-10-II</shortName>
    </recommendedName>
</protein>
<name>MT12_MYTED</name>
<sequence>MPAPCNCIETNVCICDTGCSGDGCRCGDACKCSGADCKCSGCKVVCKCSGSCECGKGCTGPSTCKCAPGCSCK</sequence>
<feature type="initiator methionine" description="Removed" evidence="2">
    <location>
        <position position="1"/>
    </location>
</feature>
<feature type="chain" id="PRO_0000197326" description="Metallothionein 10-II">
    <location>
        <begin position="2"/>
        <end position="73"/>
    </location>
</feature>
<feature type="binding site" evidence="1">
    <location>
        <position position="15"/>
    </location>
    <ligand>
        <name>Cd(2+)</name>
        <dbReference type="ChEBI" id="CHEBI:48775"/>
        <label>1</label>
    </ligand>
</feature>
<feature type="binding site" evidence="1">
    <location>
        <position position="19"/>
    </location>
    <ligand>
        <name>Cd(2+)</name>
        <dbReference type="ChEBI" id="CHEBI:48775"/>
        <label>1</label>
    </ligand>
</feature>
<feature type="binding site" evidence="1">
    <location>
        <position position="19"/>
    </location>
    <ligand>
        <name>Cd(2+)</name>
        <dbReference type="ChEBI" id="CHEBI:48775"/>
        <label>2</label>
    </ligand>
</feature>
<feature type="binding site" evidence="1">
    <location>
        <position position="24"/>
    </location>
    <ligand>
        <name>Cd(2+)</name>
        <dbReference type="ChEBI" id="CHEBI:48775"/>
        <label>2</label>
    </ligand>
</feature>
<feature type="binding site" evidence="1">
    <location>
        <position position="26"/>
    </location>
    <ligand>
        <name>Cd(2+)</name>
        <dbReference type="ChEBI" id="CHEBI:48775"/>
        <label>3</label>
    </ligand>
</feature>
<feature type="binding site" evidence="1">
    <location>
        <position position="30"/>
    </location>
    <ligand>
        <name>Cd(2+)</name>
        <dbReference type="ChEBI" id="CHEBI:48775"/>
        <label>3</label>
    </ligand>
</feature>
<feature type="binding site" evidence="1">
    <location>
        <position position="32"/>
    </location>
    <ligand>
        <name>Cd(2+)</name>
        <dbReference type="ChEBI" id="CHEBI:48775"/>
        <label>1</label>
    </ligand>
</feature>
<feature type="binding site" evidence="1">
    <location>
        <position position="32"/>
    </location>
    <ligand>
        <name>Cd(2+)</name>
        <dbReference type="ChEBI" id="CHEBI:48775"/>
        <label>3</label>
    </ligand>
</feature>
<feature type="binding site" evidence="1">
    <location>
        <position position="37"/>
    </location>
    <ligand>
        <name>Cd(2+)</name>
        <dbReference type="ChEBI" id="CHEBI:48775"/>
        <label>1</label>
    </ligand>
</feature>
<feature type="binding site" evidence="1">
    <location>
        <position position="39"/>
    </location>
    <ligand>
        <name>Cd(2+)</name>
        <dbReference type="ChEBI" id="CHEBI:48775"/>
        <label>2</label>
    </ligand>
</feature>
<feature type="binding site" evidence="1">
    <location>
        <position position="42"/>
    </location>
    <ligand>
        <name>Cd(2+)</name>
        <dbReference type="ChEBI" id="CHEBI:48775"/>
        <label>2</label>
    </ligand>
</feature>
<feature type="binding site" evidence="1">
    <location>
        <position position="42"/>
    </location>
    <ligand>
        <name>Cd(2+)</name>
        <dbReference type="ChEBI" id="CHEBI:48775"/>
        <label>3</label>
    </ligand>
</feature>
<feature type="binding site" evidence="1">
    <location>
        <position position="46"/>
    </location>
    <ligand>
        <name>Cd(2+)</name>
        <dbReference type="ChEBI" id="CHEBI:48775"/>
        <label>4</label>
    </ligand>
</feature>
<feature type="binding site" evidence="1">
    <location>
        <position position="48"/>
    </location>
    <ligand>
        <name>Cd(2+)</name>
        <dbReference type="ChEBI" id="CHEBI:48775"/>
        <label>5</label>
    </ligand>
</feature>
<feature type="binding site" evidence="1">
    <location>
        <position position="52"/>
    </location>
    <ligand>
        <name>Cd(2+)</name>
        <dbReference type="ChEBI" id="CHEBI:48775"/>
        <label>5</label>
    </ligand>
</feature>
<feature type="binding site" evidence="1">
    <location>
        <position position="54"/>
    </location>
    <ligand>
        <name>Cd(2+)</name>
        <dbReference type="ChEBI" id="CHEBI:48775"/>
        <label>5</label>
    </ligand>
</feature>
<feature type="binding site" evidence="1">
    <location>
        <position position="54"/>
    </location>
    <ligand>
        <name>Cd(2+)</name>
        <dbReference type="ChEBI" id="CHEBI:48775"/>
        <label>6</label>
    </ligand>
</feature>
<feature type="binding site" evidence="1">
    <location>
        <position position="58"/>
    </location>
    <ligand>
        <name>Cd(2+)</name>
        <dbReference type="ChEBI" id="CHEBI:48775"/>
        <label>4</label>
    </ligand>
</feature>
<feature type="binding site" evidence="1">
    <location>
        <position position="58"/>
    </location>
    <ligand>
        <name>Cd(2+)</name>
        <dbReference type="ChEBI" id="CHEBI:48775"/>
        <label>5</label>
    </ligand>
</feature>
<feature type="binding site" evidence="1">
    <location>
        <position position="64"/>
    </location>
    <ligand>
        <name>Cd(2+)</name>
        <dbReference type="ChEBI" id="CHEBI:48775"/>
        <label>4</label>
    </ligand>
</feature>
<feature type="binding site" evidence="1">
    <location>
        <position position="66"/>
    </location>
    <ligand>
        <name>Cd(2+)</name>
        <dbReference type="ChEBI" id="CHEBI:48775"/>
        <label>6</label>
    </ligand>
</feature>
<feature type="binding site" evidence="1">
    <location>
        <position position="70"/>
    </location>
    <ligand>
        <name>Cd(2+)</name>
        <dbReference type="ChEBI" id="CHEBI:48775"/>
        <label>6</label>
    </ligand>
</feature>
<feature type="binding site" evidence="1">
    <location>
        <position position="72"/>
    </location>
    <ligand>
        <name>Cd(2+)</name>
        <dbReference type="ChEBI" id="CHEBI:48775"/>
        <label>4</label>
    </ligand>
</feature>
<feature type="binding site" evidence="1">
    <location>
        <position position="72"/>
    </location>
    <ligand>
        <name>Cd(2+)</name>
        <dbReference type="ChEBI" id="CHEBI:48775"/>
        <label>6</label>
    </ligand>
</feature>
<feature type="sequence conflict" description="In Ref. 2; AA sequence." evidence="3" ref="2">
    <original>D</original>
    <variation>E</variation>
    <location>
        <position position="22"/>
    </location>
</feature>
<keyword id="KW-0104">Cadmium</keyword>
<keyword id="KW-0903">Direct protein sequencing</keyword>
<keyword id="KW-0479">Metal-binding</keyword>
<keyword id="KW-0480">Metal-thiolate cluster</keyword>